<name>DNAK2_PROMM</name>
<protein>
    <recommendedName>
        <fullName>Chaperone protein dnaK2</fullName>
    </recommendedName>
    <alternativeName>
        <fullName>HSP70-2</fullName>
    </alternativeName>
    <alternativeName>
        <fullName>Heat shock 70 kDa protein 2</fullName>
    </alternativeName>
    <alternativeName>
        <fullName>Heat shock protein 70-2</fullName>
    </alternativeName>
</protein>
<comment type="function">
    <text evidence="1">Acts as a chaperone.</text>
</comment>
<comment type="induction">
    <text evidence="1">By stress conditions e.g. heat shock (By similarity).</text>
</comment>
<comment type="similarity">
    <text evidence="3">Belongs to the heat shock protein 70 family.</text>
</comment>
<accession>Q7V3T5</accession>
<dbReference type="EMBL" id="BX548175">
    <property type="protein sequence ID" value="CAE22429.1"/>
    <property type="molecule type" value="Genomic_DNA"/>
</dbReference>
<dbReference type="SMR" id="Q7V3T5"/>
<dbReference type="KEGG" id="pmt:PMT_2255"/>
<dbReference type="eggNOG" id="COG0443">
    <property type="taxonomic scope" value="Bacteria"/>
</dbReference>
<dbReference type="HOGENOM" id="CLU_005965_2_4_3"/>
<dbReference type="OrthoDB" id="9766019at2"/>
<dbReference type="Proteomes" id="UP000001423">
    <property type="component" value="Chromosome"/>
</dbReference>
<dbReference type="GO" id="GO:0005524">
    <property type="term" value="F:ATP binding"/>
    <property type="evidence" value="ECO:0007669"/>
    <property type="project" value="UniProtKB-UniRule"/>
</dbReference>
<dbReference type="GO" id="GO:0140662">
    <property type="term" value="F:ATP-dependent protein folding chaperone"/>
    <property type="evidence" value="ECO:0007669"/>
    <property type="project" value="InterPro"/>
</dbReference>
<dbReference type="GO" id="GO:0051082">
    <property type="term" value="F:unfolded protein binding"/>
    <property type="evidence" value="ECO:0007669"/>
    <property type="project" value="InterPro"/>
</dbReference>
<dbReference type="CDD" id="cd10234">
    <property type="entry name" value="ASKHA_NBD_HSP70_DnaK-like"/>
    <property type="match status" value="1"/>
</dbReference>
<dbReference type="FunFam" id="2.60.34.10:FF:000014">
    <property type="entry name" value="Chaperone protein DnaK HSP70"/>
    <property type="match status" value="1"/>
</dbReference>
<dbReference type="FunFam" id="1.20.1270.10:FF:000001">
    <property type="entry name" value="Molecular chaperone DnaK"/>
    <property type="match status" value="1"/>
</dbReference>
<dbReference type="FunFam" id="3.30.420.40:FF:000004">
    <property type="entry name" value="Molecular chaperone DnaK"/>
    <property type="match status" value="1"/>
</dbReference>
<dbReference type="FunFam" id="3.90.640.10:FF:000003">
    <property type="entry name" value="Molecular chaperone DnaK"/>
    <property type="match status" value="1"/>
</dbReference>
<dbReference type="Gene3D" id="1.20.1270.10">
    <property type="match status" value="1"/>
</dbReference>
<dbReference type="Gene3D" id="3.30.420.40">
    <property type="match status" value="2"/>
</dbReference>
<dbReference type="Gene3D" id="3.90.640.10">
    <property type="entry name" value="Actin, Chain A, domain 4"/>
    <property type="match status" value="1"/>
</dbReference>
<dbReference type="Gene3D" id="2.60.34.10">
    <property type="entry name" value="Substrate Binding Domain Of DNAk, Chain A, domain 1"/>
    <property type="match status" value="1"/>
</dbReference>
<dbReference type="HAMAP" id="MF_00332">
    <property type="entry name" value="DnaK"/>
    <property type="match status" value="1"/>
</dbReference>
<dbReference type="InterPro" id="IPR043129">
    <property type="entry name" value="ATPase_NBD"/>
</dbReference>
<dbReference type="InterPro" id="IPR012725">
    <property type="entry name" value="Chaperone_DnaK"/>
</dbReference>
<dbReference type="InterPro" id="IPR018181">
    <property type="entry name" value="Heat_shock_70_CS"/>
</dbReference>
<dbReference type="InterPro" id="IPR029048">
    <property type="entry name" value="HSP70_C_sf"/>
</dbReference>
<dbReference type="InterPro" id="IPR029047">
    <property type="entry name" value="HSP70_peptide-bd_sf"/>
</dbReference>
<dbReference type="InterPro" id="IPR013126">
    <property type="entry name" value="Hsp_70_fam"/>
</dbReference>
<dbReference type="NCBIfam" id="NF001413">
    <property type="entry name" value="PRK00290.1"/>
    <property type="match status" value="1"/>
</dbReference>
<dbReference type="NCBIfam" id="NF003520">
    <property type="entry name" value="PRK05183.1"/>
    <property type="match status" value="1"/>
</dbReference>
<dbReference type="NCBIfam" id="TIGR02350">
    <property type="entry name" value="prok_dnaK"/>
    <property type="match status" value="1"/>
</dbReference>
<dbReference type="PANTHER" id="PTHR19375">
    <property type="entry name" value="HEAT SHOCK PROTEIN 70KDA"/>
    <property type="match status" value="1"/>
</dbReference>
<dbReference type="Pfam" id="PF00012">
    <property type="entry name" value="HSP70"/>
    <property type="match status" value="1"/>
</dbReference>
<dbReference type="PRINTS" id="PR00301">
    <property type="entry name" value="HEATSHOCK70"/>
</dbReference>
<dbReference type="SUPFAM" id="SSF53067">
    <property type="entry name" value="Actin-like ATPase domain"/>
    <property type="match status" value="2"/>
</dbReference>
<dbReference type="SUPFAM" id="SSF100934">
    <property type="entry name" value="Heat shock protein 70kD (HSP70), C-terminal subdomain"/>
    <property type="match status" value="1"/>
</dbReference>
<dbReference type="SUPFAM" id="SSF100920">
    <property type="entry name" value="Heat shock protein 70kD (HSP70), peptide-binding domain"/>
    <property type="match status" value="1"/>
</dbReference>
<dbReference type="PROSITE" id="PS00297">
    <property type="entry name" value="HSP70_1"/>
    <property type="match status" value="1"/>
</dbReference>
<dbReference type="PROSITE" id="PS00329">
    <property type="entry name" value="HSP70_2"/>
    <property type="match status" value="1"/>
</dbReference>
<dbReference type="PROSITE" id="PS01036">
    <property type="entry name" value="HSP70_3"/>
    <property type="match status" value="1"/>
</dbReference>
<organism>
    <name type="scientific">Prochlorococcus marinus (strain MIT 9313)</name>
    <dbReference type="NCBI Taxonomy" id="74547"/>
    <lineage>
        <taxon>Bacteria</taxon>
        <taxon>Bacillati</taxon>
        <taxon>Cyanobacteriota</taxon>
        <taxon>Cyanophyceae</taxon>
        <taxon>Synechococcales</taxon>
        <taxon>Prochlorococcaceae</taxon>
        <taxon>Prochlorococcus</taxon>
    </lineage>
</organism>
<sequence>MGKVVGIDLGTTNSCVAVMEGGKPVVIANAEGFRTTPSVVAYTKNQDQLVGQIAKRQAVMNTDNTFYSAKRFVGRRVDEVNEESKEVSYEVEKSGSNVRLKCPVLDKQFSPEEVSAQVLRKLAEDAGKYLGENVTQAVITVPAYFNDSQRQATKDAGKIAGLEVLRIINEPTAAALAYGLDKKSNERILVFDLGGGTFDVSVLEVGDGVFEVLSTSGDTHLGGDDFDKVIVDHLAATFKANEGIDLRQDKQALQRLTEAAEKAKIELSSATQSEINLPFITATSEGPKHLDLTLTRAKFEELASKLIDRCRVPVEQALKDAKLSSGELDEIVMVGGSSRMPAVQELVKRVTGKDPNQTVNPDEVVAVGAAIQGGVLAGEVKDILLLDVTPLSLGVETLGGVMTKMITRNTTVPTKKSETYSTAVDGQTNVEIHVLQGEREMASDNKSLGTFRLDGIPPAPRGVPQIEVTFDIDANGILSVNAKDKGSGKEQSISITGASTLSENEVEKMVKDAETNASADKEKRERIDIKNQAETLVYQAEKQLGELADKVDADSKAKVEDKRVKLKAAIEKDDFDAMKSLLEELQQELYTVGASVYQQAGAAAAESGADAGAAGAGDSSSGDDVIDAEFTESK</sequence>
<gene>
    <name type="primary">dnaK2</name>
    <name type="ordered locus">PMT_2255</name>
</gene>
<feature type="chain" id="PRO_0000078515" description="Chaperone protein dnaK2">
    <location>
        <begin position="1"/>
        <end position="634"/>
    </location>
</feature>
<feature type="region of interest" description="Disordered" evidence="2">
    <location>
        <begin position="601"/>
        <end position="634"/>
    </location>
</feature>
<feature type="compositionally biased region" description="Low complexity" evidence="2">
    <location>
        <begin position="601"/>
        <end position="623"/>
    </location>
</feature>
<feature type="compositionally biased region" description="Acidic residues" evidence="2">
    <location>
        <begin position="624"/>
        <end position="634"/>
    </location>
</feature>
<feature type="modified residue" description="Phosphothreonine; by autocatalysis" evidence="1">
    <location>
        <position position="197"/>
    </location>
</feature>
<evidence type="ECO:0000250" key="1"/>
<evidence type="ECO:0000256" key="2">
    <source>
        <dbReference type="SAM" id="MobiDB-lite"/>
    </source>
</evidence>
<evidence type="ECO:0000305" key="3"/>
<proteinExistence type="inferred from homology"/>
<keyword id="KW-0067">ATP-binding</keyword>
<keyword id="KW-0143">Chaperone</keyword>
<keyword id="KW-0547">Nucleotide-binding</keyword>
<keyword id="KW-0597">Phosphoprotein</keyword>
<keyword id="KW-1185">Reference proteome</keyword>
<keyword id="KW-0346">Stress response</keyword>
<reference key="1">
    <citation type="journal article" date="2003" name="Nature">
        <title>Genome divergence in two Prochlorococcus ecotypes reflects oceanic niche differentiation.</title>
        <authorList>
            <person name="Rocap G."/>
            <person name="Larimer F.W."/>
            <person name="Lamerdin J.E."/>
            <person name="Malfatti S."/>
            <person name="Chain P."/>
            <person name="Ahlgren N.A."/>
            <person name="Arellano A."/>
            <person name="Coleman M."/>
            <person name="Hauser L."/>
            <person name="Hess W.R."/>
            <person name="Johnson Z.I."/>
            <person name="Land M.L."/>
            <person name="Lindell D."/>
            <person name="Post A.F."/>
            <person name="Regala W."/>
            <person name="Shah M."/>
            <person name="Shaw S.L."/>
            <person name="Steglich C."/>
            <person name="Sullivan M.B."/>
            <person name="Ting C.S."/>
            <person name="Tolonen A."/>
            <person name="Webb E.A."/>
            <person name="Zinser E.R."/>
            <person name="Chisholm S.W."/>
        </authorList>
    </citation>
    <scope>NUCLEOTIDE SEQUENCE [LARGE SCALE GENOMIC DNA]</scope>
    <source>
        <strain>MIT 9313</strain>
    </source>
</reference>